<dbReference type="EMBL" id="CP000113">
    <property type="protein sequence ID" value="ABF87797.1"/>
    <property type="status" value="ALT_INIT"/>
    <property type="molecule type" value="Genomic_DNA"/>
</dbReference>
<dbReference type="RefSeq" id="WP_026114001.1">
    <property type="nucleotide sequence ID" value="NC_008095.1"/>
</dbReference>
<dbReference type="PDB" id="4PT2">
    <property type="method" value="EM"/>
    <property type="resolution" value="4.60 A"/>
    <property type="chains" value="A/B/P=1-287"/>
</dbReference>
<dbReference type="PDB" id="7S20">
    <property type="method" value="EM"/>
    <property type="resolution" value="3.40 A"/>
    <property type="chains" value="A/B/C=1-287"/>
</dbReference>
<dbReference type="PDB" id="7S21">
    <property type="method" value="EM"/>
    <property type="resolution" value="3.40 A"/>
    <property type="chains" value="A=1-287"/>
</dbReference>
<dbReference type="PDB" id="7S2T">
    <property type="method" value="EM"/>
    <property type="resolution" value="3.45 A"/>
    <property type="chains" value="A/B/C=1-287"/>
</dbReference>
<dbReference type="PDB" id="7S4Q">
    <property type="method" value="EM"/>
    <property type="resolution" value="3.12 A"/>
    <property type="chains" value="A/B/C=1-287"/>
</dbReference>
<dbReference type="PDB" id="8TK7">
    <property type="method" value="EM"/>
    <property type="resolution" value="2.53 A"/>
    <property type="chains" value="A/B/C=1-287"/>
</dbReference>
<dbReference type="PDB" id="8V4N">
    <property type="method" value="EM"/>
    <property type="resolution" value="2.43 A"/>
    <property type="chains" value="A=1-287"/>
</dbReference>
<dbReference type="PDB" id="8V4Q">
    <property type="method" value="EM"/>
    <property type="resolution" value="2.71 A"/>
    <property type="chains" value="A/B/C=1-287"/>
</dbReference>
<dbReference type="PDB" id="8VJO">
    <property type="method" value="EM"/>
    <property type="resolution" value="2.40 A"/>
    <property type="chains" value="A/B/C=1-287"/>
</dbReference>
<dbReference type="PDB" id="9B9I">
    <property type="method" value="EM"/>
    <property type="resolution" value="2.86 A"/>
    <property type="chains" value="A=1-287"/>
</dbReference>
<dbReference type="PDB" id="9B9Q">
    <property type="method" value="EM"/>
    <property type="resolution" value="3.14 A"/>
    <property type="chains" value="A/B/C=1-287"/>
</dbReference>
<dbReference type="PDB" id="9BC8">
    <property type="method" value="EM"/>
    <property type="resolution" value="3.46 A"/>
    <property type="chains" value="A/B/C/D=1-287"/>
</dbReference>
<dbReference type="PDBsum" id="4PT2"/>
<dbReference type="PDBsum" id="7S20"/>
<dbReference type="PDBsum" id="7S21"/>
<dbReference type="PDBsum" id="7S2T"/>
<dbReference type="PDBsum" id="7S4Q"/>
<dbReference type="PDBsum" id="8TK7"/>
<dbReference type="PDBsum" id="8V4N"/>
<dbReference type="PDBsum" id="8V4Q"/>
<dbReference type="PDBsum" id="8VJO"/>
<dbReference type="PDBsum" id="9B9I"/>
<dbReference type="PDBsum" id="9B9Q"/>
<dbReference type="PDBsum" id="9BC8"/>
<dbReference type="EMDB" id="EMD-24814"/>
<dbReference type="EMDB" id="EMD-24815"/>
<dbReference type="EMDB" id="EMD-24816"/>
<dbReference type="EMDB" id="EMD-24832"/>
<dbReference type="EMDB" id="EMD-41322"/>
<dbReference type="EMDB" id="EMD-42974"/>
<dbReference type="EMDB" id="EMD-42975"/>
<dbReference type="EMDB" id="EMD-43290"/>
<dbReference type="EMDB" id="EMD-44383"/>
<dbReference type="EMDB" id="EMD-44388"/>
<dbReference type="EMDB" id="EMD-44427"/>
<dbReference type="EMDB" id="EMD-5917"/>
<dbReference type="SMR" id="Q1D6H4"/>
<dbReference type="IntAct" id="Q1D6H4">
    <property type="interactions" value="3"/>
</dbReference>
<dbReference type="MINT" id="Q1D6H4"/>
<dbReference type="STRING" id="246197.MXAN_3556"/>
<dbReference type="TCDB" id="1.S.7.1.5">
    <property type="family name" value="the bacterial/archaeal nanocompartment encapsulin shell protein2 (banc-sp2) family"/>
</dbReference>
<dbReference type="EnsemblBacteria" id="ABF87797">
    <property type="protein sequence ID" value="ABF87797"/>
    <property type="gene ID" value="MXAN_3556"/>
</dbReference>
<dbReference type="GeneID" id="41360901"/>
<dbReference type="KEGG" id="mxa:MXAN_3556"/>
<dbReference type="eggNOG" id="COG1659">
    <property type="taxonomic scope" value="Bacteria"/>
</dbReference>
<dbReference type="HOGENOM" id="CLU_089875_0_0_7"/>
<dbReference type="OrthoDB" id="2922at2"/>
<dbReference type="BRENDA" id="1.16.3.1">
    <property type="organism ID" value="3551"/>
</dbReference>
<dbReference type="EvolutionaryTrace" id="Q1D6H4"/>
<dbReference type="Proteomes" id="UP000002402">
    <property type="component" value="Chromosome"/>
</dbReference>
<dbReference type="GO" id="GO:0140737">
    <property type="term" value="C:encapsulin nanocompartment"/>
    <property type="evidence" value="ECO:0000314"/>
    <property type="project" value="UniProtKB"/>
</dbReference>
<dbReference type="GO" id="GO:0006879">
    <property type="term" value="P:intracellular iron ion homeostasis"/>
    <property type="evidence" value="ECO:0007669"/>
    <property type="project" value="UniProtKB-KW"/>
</dbReference>
<dbReference type="GO" id="GO:0006826">
    <property type="term" value="P:iron ion transport"/>
    <property type="evidence" value="ECO:0007669"/>
    <property type="project" value="UniProtKB-KW"/>
</dbReference>
<dbReference type="Gene3D" id="3.30.2400.30">
    <property type="match status" value="1"/>
</dbReference>
<dbReference type="Gene3D" id="3.30.2320.10">
    <property type="entry name" value="hypothetical protein PF0899 domain"/>
    <property type="match status" value="1"/>
</dbReference>
<dbReference type="InterPro" id="IPR007544">
    <property type="entry name" value="ENCAP"/>
</dbReference>
<dbReference type="InterPro" id="IPR051429">
    <property type="entry name" value="Encapsulin_nc"/>
</dbReference>
<dbReference type="NCBIfam" id="NF041155">
    <property type="entry name" value="encap_f1"/>
    <property type="match status" value="1"/>
</dbReference>
<dbReference type="PANTHER" id="PTHR37165">
    <property type="entry name" value="PEPTIDASE U56 FAMILY"/>
    <property type="match status" value="1"/>
</dbReference>
<dbReference type="PANTHER" id="PTHR37165:SF1">
    <property type="entry name" value="TYPE 1 ENCAPSULIN SHELL PROTEIN"/>
    <property type="match status" value="1"/>
</dbReference>
<dbReference type="Pfam" id="PF04454">
    <property type="entry name" value="Linocin_M18"/>
    <property type="match status" value="1"/>
</dbReference>
<dbReference type="PIRSF" id="PIRSF019254">
    <property type="entry name" value="CFP29"/>
    <property type="match status" value="1"/>
</dbReference>
<proteinExistence type="evidence at protein level"/>
<protein>
    <recommendedName>
        <fullName evidence="4">Type 1 encapsulin shell protein EncA</fullName>
    </recommendedName>
</protein>
<reference key="1">
    <citation type="journal article" date="2006" name="Proc. Natl. Acad. Sci. U.S.A.">
        <title>Evolution of sensory complexity recorded in a myxobacterial genome.</title>
        <authorList>
            <person name="Goldman B.S."/>
            <person name="Nierman W.C."/>
            <person name="Kaiser D."/>
            <person name="Slater S.C."/>
            <person name="Durkin A.S."/>
            <person name="Eisen J.A."/>
            <person name="Ronning C.M."/>
            <person name="Barbazuk W.B."/>
            <person name="Blanchard M."/>
            <person name="Field C."/>
            <person name="Halling C."/>
            <person name="Hinkle G."/>
            <person name="Iartchuk O."/>
            <person name="Kim H.S."/>
            <person name="Mackenzie C."/>
            <person name="Madupu R."/>
            <person name="Miller N."/>
            <person name="Shvartsbeyn A."/>
            <person name="Sullivan S.A."/>
            <person name="Vaudin M."/>
            <person name="Wiegand R."/>
            <person name="Kaplan H.B."/>
        </authorList>
    </citation>
    <scope>NUCLEOTIDE SEQUENCE [LARGE SCALE GENOMIC DNA]</scope>
    <source>
        <strain>DK1622</strain>
    </source>
</reference>
<reference key="2">
    <citation type="journal article" date="2009" name="J. Microbiol. Biotechnol.">
        <title>Operon required for fruiting body development in Myxococcus xanthus.</title>
        <authorList>
            <person name="Kim D."/>
            <person name="Chung J."/>
            <person name="Hyun H."/>
            <person name="Lee C."/>
            <person name="Lee K."/>
            <person name="Cho K."/>
        </authorList>
    </citation>
    <scope>OPERON STRUCTURE</scope>
    <scope>DISRUPTION PHENOTYPE</scope>
    <source>
        <strain>DZ2</strain>
    </source>
</reference>
<reference key="3">
    <citation type="journal article" date="2019" name="ACS Nano">
        <title>Iron-Sequestering Nanocompartments as Multiplexed Electron Microscopy Gene Reporters.</title>
        <authorList>
            <person name="Sigmund F."/>
            <person name="Pettinger S."/>
            <person name="Kube M."/>
            <person name="Schneider F."/>
            <person name="Schifferer M."/>
            <person name="Schneider S."/>
            <person name="Efremova M.V."/>
            <person name="Pujol-Marti J."/>
            <person name="Aichler M."/>
            <person name="Walch A."/>
            <person name="Misgeld T."/>
            <person name="Dietz H."/>
            <person name="Westmeyer G.G."/>
        </authorList>
    </citation>
    <scope>FUNCTION</scope>
    <scope>SUBCELLULAR LOCATION</scope>
    <scope>BIOTECHNOLOGY</scope>
    <source>
        <strain>DK1622</strain>
    </source>
</reference>
<reference key="4">
    <citation type="journal article" date="2021" name="Nat. Commun.">
        <title>Large-scale computational discovery and analysis of virus-derived microbial nanocompartments.</title>
        <authorList>
            <person name="Andreas M.P."/>
            <person name="Giessen T.W."/>
        </authorList>
    </citation>
    <scope>CLASSIFICATION</scope>
</reference>
<reference evidence="7" key="5">
    <citation type="journal article" date="2014" name="EMBO J.">
        <title>A virus capsid-like nanocompartment that stores iron and protects bacteria from oxidative stress.</title>
        <authorList>
            <person name="McHugh C.A."/>
            <person name="Fontana J."/>
            <person name="Nemecek D."/>
            <person name="Cheng N."/>
            <person name="Aksyuk A.A."/>
            <person name="Heymann J.B."/>
            <person name="Winkler D.C."/>
            <person name="Lam A.S."/>
            <person name="Wall J.S."/>
            <person name="Steven A.C."/>
            <person name="Hoiczyk E."/>
        </authorList>
    </citation>
    <scope>STRUCTURE BY ELECTRON MICROSCOPY (4.60 ANGSTROMS) OF 1-287</scope>
    <scope>IDENTIFICATION BY MASS SPECTROMETRY</scope>
    <scope>SEQUENCE REVISION TO N-TERMINUS</scope>
    <scope>FUNCTION</scope>
    <scope>SUBUNIT</scope>
    <scope>SUBCELLULAR LOCATION</scope>
    <scope>INDUCTION BY STARVATION</scope>
    <scope>DOMAIN</scope>
    <scope>DISRUPTION PHENOTYPE</scope>
    <source>
        <strain>DK1622</strain>
    </source>
</reference>
<feature type="chain" id="PRO_0000455315" description="Type 1 encapsulin shell protein EncA">
    <location>
        <begin position="1"/>
        <end position="287"/>
    </location>
</feature>
<feature type="strand" evidence="9">
    <location>
        <begin position="4"/>
        <end position="6"/>
    </location>
</feature>
<feature type="strand" evidence="8">
    <location>
        <begin position="7"/>
        <end position="9"/>
    </location>
</feature>
<feature type="helix" evidence="10">
    <location>
        <begin position="14"/>
        <end position="31"/>
    </location>
</feature>
<feature type="helix" evidence="10">
    <location>
        <begin position="34"/>
        <end position="37"/>
    </location>
</feature>
<feature type="strand" evidence="10">
    <location>
        <begin position="38"/>
        <end position="40"/>
    </location>
</feature>
<feature type="strand" evidence="10">
    <location>
        <begin position="50"/>
        <end position="53"/>
    </location>
</feature>
<feature type="strand" evidence="10">
    <location>
        <begin position="81"/>
        <end position="84"/>
    </location>
</feature>
<feature type="strand" evidence="10">
    <location>
        <begin position="87"/>
        <end position="94"/>
    </location>
</feature>
<feature type="helix" evidence="10">
    <location>
        <begin position="96"/>
        <end position="103"/>
    </location>
</feature>
<feature type="strand" evidence="10">
    <location>
        <begin position="104"/>
        <end position="106"/>
    </location>
</feature>
<feature type="helix" evidence="10">
    <location>
        <begin position="112"/>
        <end position="131"/>
    </location>
</feature>
<feature type="turn" evidence="10">
    <location>
        <begin position="134"/>
        <end position="137"/>
    </location>
</feature>
<feature type="turn" evidence="10">
    <location>
        <begin position="141"/>
        <end position="143"/>
    </location>
</feature>
<feature type="strand" evidence="11">
    <location>
        <begin position="155"/>
        <end position="157"/>
    </location>
</feature>
<feature type="helix" evidence="10">
    <location>
        <begin position="160"/>
        <end position="174"/>
    </location>
</feature>
<feature type="strand" evidence="10">
    <location>
        <begin position="181"/>
        <end position="185"/>
    </location>
</feature>
<feature type="helix" evidence="10">
    <location>
        <begin position="187"/>
        <end position="192"/>
    </location>
</feature>
<feature type="helix" evidence="10">
    <location>
        <begin position="196"/>
        <end position="198"/>
    </location>
</feature>
<feature type="strand" evidence="10">
    <location>
        <begin position="199"/>
        <end position="202"/>
    </location>
</feature>
<feature type="helix" evidence="10">
    <location>
        <begin position="204"/>
        <end position="212"/>
    </location>
</feature>
<feature type="strand" evidence="10">
    <location>
        <begin position="213"/>
        <end position="218"/>
    </location>
</feature>
<feature type="strand" evidence="11">
    <location>
        <begin position="220"/>
        <end position="222"/>
    </location>
</feature>
<feature type="strand" evidence="10">
    <location>
        <begin position="227"/>
        <end position="231"/>
    </location>
</feature>
<feature type="turn" evidence="10">
    <location>
        <begin position="234"/>
        <end position="236"/>
    </location>
</feature>
<feature type="strand" evidence="10">
    <location>
        <begin position="237"/>
        <end position="249"/>
    </location>
</feature>
<feature type="strand" evidence="10">
    <location>
        <begin position="253"/>
        <end position="270"/>
    </location>
</feature>
<feature type="helix" evidence="10">
    <location>
        <begin position="272"/>
        <end position="274"/>
    </location>
</feature>
<feature type="strand" evidence="10">
    <location>
        <begin position="275"/>
        <end position="277"/>
    </location>
</feature>
<gene>
    <name evidence="4" type="primary">encA</name>
    <name type="ordered locus">MXAN_3556</name>
</gene>
<evidence type="ECO:0000269" key="1">
    <source>
    </source>
</evidence>
<evidence type="ECO:0000269" key="2">
    <source>
    </source>
</evidence>
<evidence type="ECO:0000269" key="3">
    <source>
    </source>
</evidence>
<evidence type="ECO:0000303" key="4">
    <source>
    </source>
</evidence>
<evidence type="ECO:0000305" key="5"/>
<evidence type="ECO:0000305" key="6">
    <source>
    </source>
</evidence>
<evidence type="ECO:0007744" key="7">
    <source>
        <dbReference type="PDB" id="4PT2"/>
    </source>
</evidence>
<evidence type="ECO:0007829" key="8">
    <source>
        <dbReference type="PDB" id="7S2T"/>
    </source>
</evidence>
<evidence type="ECO:0007829" key="9">
    <source>
        <dbReference type="PDB" id="8TK7"/>
    </source>
</evidence>
<evidence type="ECO:0007829" key="10">
    <source>
        <dbReference type="PDB" id="8VJO"/>
    </source>
</evidence>
<evidence type="ECO:0007829" key="11">
    <source>
        <dbReference type="PDB" id="9B9I"/>
    </source>
</evidence>
<accession>Q1D6H4</accession>
<comment type="function">
    <text evidence="2 3 6">Shell component of a type 1, iron-storage encapsulin nanocompartment. Encapsulin nanocompartments are 32 nm in diameter with an iron- and phosphorus-rich core (4Fe:1P) about 24 nm in diameter. Upon expression in E.coli most particles are 32 nm, 20% are 18 nm. The core is filled with an average of 14 dense granules, 5-6 nm in diameter that are not evenly distributed. Each nanocompartment is estimated to hold 30,000-35,000 Fe atoms (PubMed:25024436, PubMed:31194509). The minor proteins EncB, EncC and EncD probably lie against the interior face of the nanocompartment (Probable).</text>
</comment>
<comment type="subunit">
    <text evidence="2">The 32 nm encapsulin nanocompartment is formed by 180 subunits; monomers form pentamers which assemble to form shells. There are 36 pores where the pentamers meet as well as 3-fold axis channels and dimer channels. The N-terminus of the protein is inside the shell.</text>
</comment>
<comment type="subcellular location">
    <subcellularLocation>
        <location evidence="2 3">Encapsulin nanocompartment</location>
    </subcellularLocation>
</comment>
<comment type="induction">
    <text evidence="1 2">Part of the MXAN_3553-MXAN_3554-MXAN_3555-encA operon (PubMed:19996678). Expression is induced by amino acid starvation (at protein level). Not present in spores (at protein level) (PubMed:25024436).</text>
</comment>
<comment type="domain">
    <text evidence="2">Has 3 domains; a discontinuous peripheral domain (P), an elongated loop (E) and the discontinuous axial domain (A).</text>
</comment>
<comment type="disruption phenotype">
    <text evidence="1 2">Does not form fruiting bodies (PubMed:19996678). Decreased survival when grown under oxidative stress (0.5 mM H2O2) (PubMed:25024436).</text>
</comment>
<comment type="biotechnology">
    <text evidence="3">The encapsulin and a cargo construct (an encB-encC-encD fusion) can be overexpressed in E.coli and in human HEK293T cells. In HEK293T in the presence of 0.5 M ferrous ammonium sulfate nanocompartments can be detected and used as cell markers. Coexpression of this nanocompartment with a larger nanocompartment from Q.thermotolerans (AC A0A0F5HPP7) allows expression of different sized iron-rich particles. The encapsulin shell proteins do not seem to mix.</text>
</comment>
<comment type="miscellaneous">
    <text evidence="6">Shows substantial structural similarity to gp5 of the HK97 viral capsid, and while the sequence homology is weak, it suggests this protein may have evolved from a viral capsid protein.</text>
</comment>
<comment type="similarity">
    <text evidence="5">Belongs to the encapsulin family. Family 1 subfamily.</text>
</comment>
<comment type="sequence caution" evidence="2">
    <conflict type="erroneous initiation">
        <sequence resource="EMBL-CDS" id="ABF87797"/>
    </conflict>
    <text>Extended N-terminus.</text>
</comment>
<name>ENCAP_MYXXD</name>
<keyword id="KW-0002">3D-structure</keyword>
<keyword id="KW-1284">Encapsulin nanocompartment</keyword>
<keyword id="KW-0406">Ion transport</keyword>
<keyword id="KW-0408">Iron</keyword>
<keyword id="KW-0409">Iron storage</keyword>
<keyword id="KW-0410">Iron transport</keyword>
<keyword id="KW-1185">Reference proteome</keyword>
<keyword id="KW-0813">Transport</keyword>
<sequence>MPDFLGHAENPLREEEWARLNETVIQVARRSLVGRRILDIYGPLGAGVQTVPYDEFQGVSPGAVDIVGEQETAMVFTDARKFKTIPIIYKDFLLHWRDIEAARTHNMPLDVSAAAGAAALCAQQEDELIFYGDARLGYEGLMTANGRLTVPLGDWTSPGGGFQAIVEATRKLNEQGHFGPYAVVLSPRLYSQLHRIYEKTGVLEIETIRQLASDGVYQSNRLRGESGVVVSTGRENMDLAVSMDMVAAYLGASRMNHPFRVLEALLLRIKHPDAICTLEGAGATERR</sequence>
<organism>
    <name type="scientific">Myxococcus xanthus (strain DK1622)</name>
    <dbReference type="NCBI Taxonomy" id="246197"/>
    <lineage>
        <taxon>Bacteria</taxon>
        <taxon>Pseudomonadati</taxon>
        <taxon>Myxococcota</taxon>
        <taxon>Myxococcia</taxon>
        <taxon>Myxococcales</taxon>
        <taxon>Cystobacterineae</taxon>
        <taxon>Myxococcaceae</taxon>
        <taxon>Myxococcus</taxon>
    </lineage>
</organism>